<sequence length="197" mass="22225">MPKKIDTKKIEECIREIIVALGDDPNREGLLDTPKRVSKMYEEVFQGMTLSNREIAEAFGTTFENEDYDSETHNNMVVVKDIPIHSYCEHHLALMYNMKVTVVYIPKDKIIGLSKISRIADMVGRRLQLQERIGTDIAEIVSMVTKSSDVGVLITGEHGCMTSRGIKKPGTLTTTTTFTGKFQTNDLLRQEALLIMK</sequence>
<accession>A6LWG6</accession>
<proteinExistence type="inferred from homology"/>
<organism>
    <name type="scientific">Clostridium beijerinckii (strain ATCC 51743 / NCIMB 8052)</name>
    <name type="common">Clostridium acetobutylicum</name>
    <dbReference type="NCBI Taxonomy" id="290402"/>
    <lineage>
        <taxon>Bacteria</taxon>
        <taxon>Bacillati</taxon>
        <taxon>Bacillota</taxon>
        <taxon>Clostridia</taxon>
        <taxon>Eubacteriales</taxon>
        <taxon>Clostridiaceae</taxon>
        <taxon>Clostridium</taxon>
    </lineage>
</organism>
<feature type="chain" id="PRO_1000100166" description="GTP cyclohydrolase 1">
    <location>
        <begin position="1"/>
        <end position="197"/>
    </location>
</feature>
<feature type="binding site" evidence="1">
    <location>
        <position position="88"/>
    </location>
    <ligand>
        <name>Zn(2+)</name>
        <dbReference type="ChEBI" id="CHEBI:29105"/>
    </ligand>
</feature>
<feature type="binding site" evidence="1">
    <location>
        <position position="91"/>
    </location>
    <ligand>
        <name>Zn(2+)</name>
        <dbReference type="ChEBI" id="CHEBI:29105"/>
    </ligand>
</feature>
<feature type="binding site" evidence="1">
    <location>
        <position position="160"/>
    </location>
    <ligand>
        <name>Zn(2+)</name>
        <dbReference type="ChEBI" id="CHEBI:29105"/>
    </ligand>
</feature>
<dbReference type="EC" id="3.5.4.16" evidence="1"/>
<dbReference type="EMBL" id="CP000721">
    <property type="protein sequence ID" value="ABR34696.1"/>
    <property type="molecule type" value="Genomic_DNA"/>
</dbReference>
<dbReference type="RefSeq" id="WP_012058751.1">
    <property type="nucleotide sequence ID" value="NC_009617.1"/>
</dbReference>
<dbReference type="SMR" id="A6LWG6"/>
<dbReference type="KEGG" id="cbe:Cbei_2540"/>
<dbReference type="eggNOG" id="COG0302">
    <property type="taxonomic scope" value="Bacteria"/>
</dbReference>
<dbReference type="HOGENOM" id="CLU_049768_3_2_9"/>
<dbReference type="UniPathway" id="UPA00848">
    <property type="reaction ID" value="UER00151"/>
</dbReference>
<dbReference type="Proteomes" id="UP000000565">
    <property type="component" value="Chromosome"/>
</dbReference>
<dbReference type="GO" id="GO:0005737">
    <property type="term" value="C:cytoplasm"/>
    <property type="evidence" value="ECO:0007669"/>
    <property type="project" value="TreeGrafter"/>
</dbReference>
<dbReference type="GO" id="GO:0005525">
    <property type="term" value="F:GTP binding"/>
    <property type="evidence" value="ECO:0007669"/>
    <property type="project" value="UniProtKB-KW"/>
</dbReference>
<dbReference type="GO" id="GO:0003934">
    <property type="term" value="F:GTP cyclohydrolase I activity"/>
    <property type="evidence" value="ECO:0007669"/>
    <property type="project" value="UniProtKB-UniRule"/>
</dbReference>
<dbReference type="GO" id="GO:0008270">
    <property type="term" value="F:zinc ion binding"/>
    <property type="evidence" value="ECO:0007669"/>
    <property type="project" value="UniProtKB-UniRule"/>
</dbReference>
<dbReference type="GO" id="GO:0006730">
    <property type="term" value="P:one-carbon metabolic process"/>
    <property type="evidence" value="ECO:0007669"/>
    <property type="project" value="UniProtKB-UniRule"/>
</dbReference>
<dbReference type="GO" id="GO:0006729">
    <property type="term" value="P:tetrahydrobiopterin biosynthetic process"/>
    <property type="evidence" value="ECO:0007669"/>
    <property type="project" value="TreeGrafter"/>
</dbReference>
<dbReference type="GO" id="GO:0046654">
    <property type="term" value="P:tetrahydrofolate biosynthetic process"/>
    <property type="evidence" value="ECO:0007669"/>
    <property type="project" value="UniProtKB-UniRule"/>
</dbReference>
<dbReference type="FunFam" id="1.10.286.10:FF:000001">
    <property type="entry name" value="GTP cyclohydrolase 1"/>
    <property type="match status" value="1"/>
</dbReference>
<dbReference type="FunFam" id="3.30.1130.10:FF:000001">
    <property type="entry name" value="GTP cyclohydrolase 1"/>
    <property type="match status" value="1"/>
</dbReference>
<dbReference type="Gene3D" id="1.10.286.10">
    <property type="match status" value="1"/>
</dbReference>
<dbReference type="Gene3D" id="3.30.1130.10">
    <property type="match status" value="1"/>
</dbReference>
<dbReference type="HAMAP" id="MF_00223">
    <property type="entry name" value="FolE"/>
    <property type="match status" value="1"/>
</dbReference>
<dbReference type="InterPro" id="IPR043133">
    <property type="entry name" value="GTP-CH-I_C/QueF"/>
</dbReference>
<dbReference type="InterPro" id="IPR043134">
    <property type="entry name" value="GTP-CH-I_N"/>
</dbReference>
<dbReference type="InterPro" id="IPR001474">
    <property type="entry name" value="GTP_CycHdrlase_I"/>
</dbReference>
<dbReference type="InterPro" id="IPR018234">
    <property type="entry name" value="GTP_CycHdrlase_I_CS"/>
</dbReference>
<dbReference type="InterPro" id="IPR020602">
    <property type="entry name" value="GTP_CycHdrlase_I_dom"/>
</dbReference>
<dbReference type="NCBIfam" id="TIGR00063">
    <property type="entry name" value="folE"/>
    <property type="match status" value="1"/>
</dbReference>
<dbReference type="NCBIfam" id="NF006825">
    <property type="entry name" value="PRK09347.1-2"/>
    <property type="match status" value="1"/>
</dbReference>
<dbReference type="NCBIfam" id="NF006826">
    <property type="entry name" value="PRK09347.1-3"/>
    <property type="match status" value="1"/>
</dbReference>
<dbReference type="PANTHER" id="PTHR11109:SF7">
    <property type="entry name" value="GTP CYCLOHYDROLASE 1"/>
    <property type="match status" value="1"/>
</dbReference>
<dbReference type="PANTHER" id="PTHR11109">
    <property type="entry name" value="GTP CYCLOHYDROLASE I"/>
    <property type="match status" value="1"/>
</dbReference>
<dbReference type="Pfam" id="PF01227">
    <property type="entry name" value="GTP_cyclohydroI"/>
    <property type="match status" value="1"/>
</dbReference>
<dbReference type="SUPFAM" id="SSF55620">
    <property type="entry name" value="Tetrahydrobiopterin biosynthesis enzymes-like"/>
    <property type="match status" value="1"/>
</dbReference>
<dbReference type="PROSITE" id="PS00859">
    <property type="entry name" value="GTP_CYCLOHYDROL_1_1"/>
    <property type="match status" value="1"/>
</dbReference>
<evidence type="ECO:0000255" key="1">
    <source>
        <dbReference type="HAMAP-Rule" id="MF_00223"/>
    </source>
</evidence>
<comment type="catalytic activity">
    <reaction evidence="1">
        <text>GTP + H2O = 7,8-dihydroneopterin 3'-triphosphate + formate + H(+)</text>
        <dbReference type="Rhea" id="RHEA:17473"/>
        <dbReference type="ChEBI" id="CHEBI:15377"/>
        <dbReference type="ChEBI" id="CHEBI:15378"/>
        <dbReference type="ChEBI" id="CHEBI:15740"/>
        <dbReference type="ChEBI" id="CHEBI:37565"/>
        <dbReference type="ChEBI" id="CHEBI:58462"/>
        <dbReference type="EC" id="3.5.4.16"/>
    </reaction>
</comment>
<comment type="pathway">
    <text evidence="1">Cofactor biosynthesis; 7,8-dihydroneopterin triphosphate biosynthesis; 7,8-dihydroneopterin triphosphate from GTP: step 1/1.</text>
</comment>
<comment type="subunit">
    <text evidence="1">Homomer.</text>
</comment>
<comment type="similarity">
    <text evidence="1">Belongs to the GTP cyclohydrolase I family.</text>
</comment>
<gene>
    <name evidence="1" type="primary">folE</name>
    <name type="ordered locus">Cbei_2540</name>
</gene>
<name>GCH1_CLOB8</name>
<keyword id="KW-0342">GTP-binding</keyword>
<keyword id="KW-0378">Hydrolase</keyword>
<keyword id="KW-0479">Metal-binding</keyword>
<keyword id="KW-0547">Nucleotide-binding</keyword>
<keyword id="KW-0554">One-carbon metabolism</keyword>
<keyword id="KW-0862">Zinc</keyword>
<protein>
    <recommendedName>
        <fullName evidence="1">GTP cyclohydrolase 1</fullName>
        <ecNumber evidence="1">3.5.4.16</ecNumber>
    </recommendedName>
    <alternativeName>
        <fullName evidence="1">GTP cyclohydrolase I</fullName>
        <shortName evidence="1">GTP-CH-I</shortName>
    </alternativeName>
</protein>
<reference key="1">
    <citation type="submission" date="2007-06" db="EMBL/GenBank/DDBJ databases">
        <title>Complete sequence of Clostridium beijerinckii NCIMB 8052.</title>
        <authorList>
            <consortium name="US DOE Joint Genome Institute"/>
            <person name="Copeland A."/>
            <person name="Lucas S."/>
            <person name="Lapidus A."/>
            <person name="Barry K."/>
            <person name="Detter J.C."/>
            <person name="Glavina del Rio T."/>
            <person name="Hammon N."/>
            <person name="Israni S."/>
            <person name="Dalin E."/>
            <person name="Tice H."/>
            <person name="Pitluck S."/>
            <person name="Sims D."/>
            <person name="Brettin T."/>
            <person name="Bruce D."/>
            <person name="Tapia R."/>
            <person name="Brainard J."/>
            <person name="Schmutz J."/>
            <person name="Larimer F."/>
            <person name="Land M."/>
            <person name="Hauser L."/>
            <person name="Kyrpides N."/>
            <person name="Mikhailova N."/>
            <person name="Bennet G."/>
            <person name="Cann I."/>
            <person name="Chen J.-S."/>
            <person name="Contreras A.L."/>
            <person name="Jones D."/>
            <person name="Kashket E."/>
            <person name="Mitchell W."/>
            <person name="Stoddard S."/>
            <person name="Schwarz W."/>
            <person name="Qureshi N."/>
            <person name="Young M."/>
            <person name="Shi Z."/>
            <person name="Ezeji T."/>
            <person name="White B."/>
            <person name="Blaschek H."/>
            <person name="Richardson P."/>
        </authorList>
    </citation>
    <scope>NUCLEOTIDE SEQUENCE [LARGE SCALE GENOMIC DNA]</scope>
    <source>
        <strain>ATCC 51743 / NCIMB 8052</strain>
    </source>
</reference>